<gene>
    <name evidence="1" type="primary">rplO</name>
    <name type="ordered locus">Reut_A3160</name>
</gene>
<reference key="1">
    <citation type="journal article" date="2010" name="PLoS ONE">
        <title>The complete multipartite genome sequence of Cupriavidus necator JMP134, a versatile pollutant degrader.</title>
        <authorList>
            <person name="Lykidis A."/>
            <person name="Perez-Pantoja D."/>
            <person name="Ledger T."/>
            <person name="Mavromatis K."/>
            <person name="Anderson I.J."/>
            <person name="Ivanova N.N."/>
            <person name="Hooper S.D."/>
            <person name="Lapidus A."/>
            <person name="Lucas S."/>
            <person name="Gonzalez B."/>
            <person name="Kyrpides N.C."/>
        </authorList>
    </citation>
    <scope>NUCLEOTIDE SEQUENCE [LARGE SCALE GENOMIC DNA]</scope>
    <source>
        <strain>JMP134 / LMG 1197</strain>
    </source>
</reference>
<dbReference type="EMBL" id="CP000090">
    <property type="protein sequence ID" value="AAZ62520.1"/>
    <property type="molecule type" value="Genomic_DNA"/>
</dbReference>
<dbReference type="SMR" id="Q46WG3"/>
<dbReference type="STRING" id="264198.Reut_A3160"/>
<dbReference type="KEGG" id="reu:Reut_A3160"/>
<dbReference type="eggNOG" id="COG0200">
    <property type="taxonomic scope" value="Bacteria"/>
</dbReference>
<dbReference type="HOGENOM" id="CLU_055188_4_2_4"/>
<dbReference type="OrthoDB" id="9810293at2"/>
<dbReference type="GO" id="GO:0022625">
    <property type="term" value="C:cytosolic large ribosomal subunit"/>
    <property type="evidence" value="ECO:0007669"/>
    <property type="project" value="TreeGrafter"/>
</dbReference>
<dbReference type="GO" id="GO:0019843">
    <property type="term" value="F:rRNA binding"/>
    <property type="evidence" value="ECO:0007669"/>
    <property type="project" value="UniProtKB-UniRule"/>
</dbReference>
<dbReference type="GO" id="GO:0003735">
    <property type="term" value="F:structural constituent of ribosome"/>
    <property type="evidence" value="ECO:0007669"/>
    <property type="project" value="InterPro"/>
</dbReference>
<dbReference type="GO" id="GO:0006412">
    <property type="term" value="P:translation"/>
    <property type="evidence" value="ECO:0007669"/>
    <property type="project" value="UniProtKB-UniRule"/>
</dbReference>
<dbReference type="Gene3D" id="3.100.10.10">
    <property type="match status" value="1"/>
</dbReference>
<dbReference type="HAMAP" id="MF_01341">
    <property type="entry name" value="Ribosomal_uL15"/>
    <property type="match status" value="1"/>
</dbReference>
<dbReference type="InterPro" id="IPR030878">
    <property type="entry name" value="Ribosomal_uL15"/>
</dbReference>
<dbReference type="InterPro" id="IPR021131">
    <property type="entry name" value="Ribosomal_uL15/eL18"/>
</dbReference>
<dbReference type="InterPro" id="IPR036227">
    <property type="entry name" value="Ribosomal_uL15/eL18_sf"/>
</dbReference>
<dbReference type="InterPro" id="IPR005749">
    <property type="entry name" value="Ribosomal_uL15_bac-type"/>
</dbReference>
<dbReference type="NCBIfam" id="TIGR01071">
    <property type="entry name" value="rplO_bact"/>
    <property type="match status" value="1"/>
</dbReference>
<dbReference type="PANTHER" id="PTHR12934">
    <property type="entry name" value="50S RIBOSOMAL PROTEIN L15"/>
    <property type="match status" value="1"/>
</dbReference>
<dbReference type="PANTHER" id="PTHR12934:SF11">
    <property type="entry name" value="LARGE RIBOSOMAL SUBUNIT PROTEIN UL15M"/>
    <property type="match status" value="1"/>
</dbReference>
<dbReference type="Pfam" id="PF00828">
    <property type="entry name" value="Ribosomal_L27A"/>
    <property type="match status" value="1"/>
</dbReference>
<dbReference type="SUPFAM" id="SSF52080">
    <property type="entry name" value="Ribosomal proteins L15p and L18e"/>
    <property type="match status" value="1"/>
</dbReference>
<accession>Q46WG3</accession>
<evidence type="ECO:0000255" key="1">
    <source>
        <dbReference type="HAMAP-Rule" id="MF_01341"/>
    </source>
</evidence>
<evidence type="ECO:0000256" key="2">
    <source>
        <dbReference type="SAM" id="MobiDB-lite"/>
    </source>
</evidence>
<evidence type="ECO:0000305" key="3"/>
<feature type="chain" id="PRO_0000104789" description="Large ribosomal subunit protein uL15">
    <location>
        <begin position="1"/>
        <end position="144"/>
    </location>
</feature>
<feature type="region of interest" description="Disordered" evidence="2">
    <location>
        <begin position="1"/>
        <end position="48"/>
    </location>
</feature>
<feature type="compositionally biased region" description="Gly residues" evidence="2">
    <location>
        <begin position="21"/>
        <end position="31"/>
    </location>
</feature>
<name>RL15_CUPPJ</name>
<comment type="function">
    <text evidence="1">Binds to the 23S rRNA.</text>
</comment>
<comment type="subunit">
    <text evidence="1">Part of the 50S ribosomal subunit.</text>
</comment>
<comment type="similarity">
    <text evidence="1">Belongs to the universal ribosomal protein uL15 family.</text>
</comment>
<organism>
    <name type="scientific">Cupriavidus pinatubonensis (strain JMP 134 / LMG 1197)</name>
    <name type="common">Cupriavidus necator (strain JMP 134)</name>
    <dbReference type="NCBI Taxonomy" id="264198"/>
    <lineage>
        <taxon>Bacteria</taxon>
        <taxon>Pseudomonadati</taxon>
        <taxon>Pseudomonadota</taxon>
        <taxon>Betaproteobacteria</taxon>
        <taxon>Burkholderiales</taxon>
        <taxon>Burkholderiaceae</taxon>
        <taxon>Cupriavidus</taxon>
    </lineage>
</organism>
<sequence>MQLNNLKPAAGSKHAKRRVGRGIGSGLGKTAGRGHKGQKSRSGGFHKVGFEGGQMPLYRRLPKRGFTSLTKAFTAEVSLRDIERLEAAEVDLLVLKQAGLVSDLVKSAKVIKAGELTRKVTIKGLGATAGAKAAIEAAGGQIAE</sequence>
<keyword id="KW-0687">Ribonucleoprotein</keyword>
<keyword id="KW-0689">Ribosomal protein</keyword>
<keyword id="KW-0694">RNA-binding</keyword>
<keyword id="KW-0699">rRNA-binding</keyword>
<proteinExistence type="inferred from homology"/>
<protein>
    <recommendedName>
        <fullName evidence="1">Large ribosomal subunit protein uL15</fullName>
    </recommendedName>
    <alternativeName>
        <fullName evidence="3">50S ribosomal protein L15</fullName>
    </alternativeName>
</protein>